<feature type="signal peptide" evidence="3">
    <location>
        <begin position="1"/>
        <end position="19"/>
    </location>
</feature>
<feature type="chain" id="PRO_0000332987" description="Sperm-egg fusion protein Juno">
    <location>
        <begin position="20"/>
        <end position="228"/>
    </location>
</feature>
<feature type="propeptide" id="PRO_0000429472" evidence="3">
    <location>
        <begin position="229"/>
        <end position="250"/>
    </location>
</feature>
<feature type="region of interest" description="Important for interaction with IZUMO1" evidence="5 6">
    <location>
        <begin position="62"/>
        <end position="81"/>
    </location>
</feature>
<feature type="lipid moiety-binding region" description="GPI-anchor amidated serine" evidence="3">
    <location>
        <position position="228"/>
    </location>
</feature>
<feature type="glycosylation site" description="N-linked (GlcNAc...) asparagine" evidence="3">
    <location>
        <position position="73"/>
    </location>
</feature>
<feature type="disulfide bond" evidence="5 6 12 13 14 15 16 17 18">
    <location>
        <begin position="27"/>
        <end position="55"/>
    </location>
</feature>
<feature type="disulfide bond" evidence="5 6 12 13 14 15 16 17 18">
    <location>
        <begin position="47"/>
        <end position="95"/>
    </location>
</feature>
<feature type="disulfide bond" evidence="5 6 12 13 14 15 16 17 18">
    <location>
        <begin position="56"/>
        <end position="99"/>
    </location>
</feature>
<feature type="disulfide bond" evidence="5 6 12 13 14 15 16 17 18">
    <location>
        <begin position="79"/>
        <end position="172"/>
    </location>
</feature>
<feature type="disulfide bond" evidence="5 6 12 13 14 15 16 17 18">
    <location>
        <begin position="86"/>
        <end position="143"/>
    </location>
</feature>
<feature type="disulfide bond" evidence="5 6 12 13 14 15 16 17 18">
    <location>
        <begin position="132"/>
        <end position="206"/>
    </location>
</feature>
<feature type="disulfide bond" evidence="5 6 12 13 14 15 16 17 18">
    <location>
        <begin position="136"/>
        <end position="186"/>
    </location>
</feature>
<feature type="disulfide bond" evidence="5 6 12 13 14 15 16 17 18">
    <location>
        <begin position="149"/>
        <end position="166"/>
    </location>
</feature>
<feature type="splice variant" id="VSP_040470" description="In isoform 2." evidence="10">
    <location>
        <begin position="110"/>
        <end position="116"/>
    </location>
</feature>
<feature type="mutagenesis site" description="Nearly abolishes interaction with IZUMO1." evidence="6">
    <original>E</original>
    <variation>A</variation>
    <location>
        <position position="45"/>
    </location>
</feature>
<feature type="mutagenesis site" description="Abolishes interaction with IZUMO1." evidence="6">
    <original>E</original>
    <variation>K</variation>
    <location>
        <position position="45"/>
    </location>
</feature>
<feature type="mutagenesis site" description="Nearly abolishes interaction with IZUMO1." evidence="5 6">
    <original>W</original>
    <variation>A</variation>
    <location>
        <position position="62"/>
    </location>
</feature>
<feature type="mutagenesis site" description="Abolishes interaction with IZUMO1." evidence="5 6">
    <original>L</original>
    <variation>A</variation>
    <location>
        <position position="81"/>
    </location>
</feature>
<feature type="mutagenesis site" description="Mildly decreases interaction with IZUMO1." evidence="6">
    <original>K</original>
    <variation>E</variation>
    <location>
        <position position="163"/>
    </location>
</feature>
<feature type="helix" evidence="21">
    <location>
        <begin position="21"/>
        <end position="23"/>
    </location>
</feature>
<feature type="strand" evidence="22">
    <location>
        <begin position="24"/>
        <end position="26"/>
    </location>
</feature>
<feature type="strand" evidence="21">
    <location>
        <begin position="30"/>
        <end position="32"/>
    </location>
</feature>
<feature type="helix" evidence="20">
    <location>
        <begin position="45"/>
        <end position="50"/>
    </location>
</feature>
<feature type="strand" evidence="20">
    <location>
        <begin position="53"/>
        <end position="56"/>
    </location>
</feature>
<feature type="helix" evidence="20">
    <location>
        <begin position="58"/>
        <end position="63"/>
    </location>
</feature>
<feature type="strand" evidence="20">
    <location>
        <begin position="66"/>
        <end position="68"/>
    </location>
</feature>
<feature type="turn" evidence="20">
    <location>
        <begin position="70"/>
        <end position="72"/>
    </location>
</feature>
<feature type="turn" evidence="20">
    <location>
        <begin position="76"/>
        <end position="79"/>
    </location>
</feature>
<feature type="helix" evidence="20">
    <location>
        <begin position="84"/>
        <end position="99"/>
    </location>
</feature>
<feature type="helix" evidence="20">
    <location>
        <begin position="104"/>
        <end position="106"/>
    </location>
</feature>
<feature type="strand" evidence="20">
    <location>
        <begin position="107"/>
        <end position="109"/>
    </location>
</feature>
<feature type="strand" evidence="20">
    <location>
        <begin position="124"/>
        <end position="126"/>
    </location>
</feature>
<feature type="strand" evidence="20">
    <location>
        <begin position="129"/>
        <end position="131"/>
    </location>
</feature>
<feature type="helix" evidence="20">
    <location>
        <begin position="133"/>
        <end position="143"/>
    </location>
</feature>
<feature type="strand" evidence="20">
    <location>
        <begin position="146"/>
        <end position="149"/>
    </location>
</feature>
<feature type="strand" evidence="19">
    <location>
        <begin position="153"/>
        <end position="155"/>
    </location>
</feature>
<feature type="helix" evidence="20">
    <location>
        <begin position="175"/>
        <end position="178"/>
    </location>
</feature>
<feature type="helix" evidence="20">
    <location>
        <begin position="182"/>
        <end position="189"/>
    </location>
</feature>
<feature type="turn" evidence="20">
    <location>
        <begin position="190"/>
        <end position="192"/>
    </location>
</feature>
<feature type="strand" evidence="20">
    <location>
        <begin position="193"/>
        <end position="196"/>
    </location>
</feature>
<feature type="strand" evidence="20">
    <location>
        <begin position="203"/>
        <end position="207"/>
    </location>
</feature>
<feature type="helix" evidence="20">
    <location>
        <begin position="213"/>
        <end position="215"/>
    </location>
</feature>
<feature type="helix" evidence="20">
    <location>
        <begin position="220"/>
        <end position="227"/>
    </location>
</feature>
<accession>A6ND01</accession>
<proteinExistence type="evidence at protein level"/>
<organism>
    <name type="scientific">Homo sapiens</name>
    <name type="common">Human</name>
    <dbReference type="NCBI Taxonomy" id="9606"/>
    <lineage>
        <taxon>Eukaryota</taxon>
        <taxon>Metazoa</taxon>
        <taxon>Chordata</taxon>
        <taxon>Craniata</taxon>
        <taxon>Vertebrata</taxon>
        <taxon>Euteleostomi</taxon>
        <taxon>Mammalia</taxon>
        <taxon>Eutheria</taxon>
        <taxon>Euarchontoglires</taxon>
        <taxon>Primates</taxon>
        <taxon>Haplorrhini</taxon>
        <taxon>Catarrhini</taxon>
        <taxon>Hominidae</taxon>
        <taxon>Homo</taxon>
    </lineage>
</organism>
<reference key="1">
    <citation type="journal article" date="2006" name="Nature">
        <title>Human chromosome 11 DNA sequence and analysis including novel gene identification.</title>
        <authorList>
            <person name="Taylor T.D."/>
            <person name="Noguchi H."/>
            <person name="Totoki Y."/>
            <person name="Toyoda A."/>
            <person name="Kuroki Y."/>
            <person name="Dewar K."/>
            <person name="Lloyd C."/>
            <person name="Itoh T."/>
            <person name="Takeda T."/>
            <person name="Kim D.-W."/>
            <person name="She X."/>
            <person name="Barlow K.F."/>
            <person name="Bloom T."/>
            <person name="Bruford E."/>
            <person name="Chang J.L."/>
            <person name="Cuomo C.A."/>
            <person name="Eichler E."/>
            <person name="FitzGerald M.G."/>
            <person name="Jaffe D.B."/>
            <person name="LaButti K."/>
            <person name="Nicol R."/>
            <person name="Park H.-S."/>
            <person name="Seaman C."/>
            <person name="Sougnez C."/>
            <person name="Yang X."/>
            <person name="Zimmer A.R."/>
            <person name="Zody M.C."/>
            <person name="Birren B.W."/>
            <person name="Nusbaum C."/>
            <person name="Fujiyama A."/>
            <person name="Hattori M."/>
            <person name="Rogers J."/>
            <person name="Lander E.S."/>
            <person name="Sakaki Y."/>
        </authorList>
    </citation>
    <scope>NUCLEOTIDE SEQUENCE [LARGE SCALE GENOMIC DNA]</scope>
</reference>
<reference key="2">
    <citation type="journal article" date="2014" name="Nature">
        <title>Juno is the egg Izumo receptor and is essential for mammalian fertilization.</title>
        <authorList>
            <person name="Bianchi E."/>
            <person name="Doe B."/>
            <person name="Goulding D."/>
            <person name="Wright G.J."/>
        </authorList>
    </citation>
    <scope>INTERACTION WITH IZUMO1</scope>
</reference>
<reference key="3">
    <citation type="journal article" date="2019" name="Hum. Reprod.">
        <title>JUNO, the receptor of sperm IZUMO1, is expressed by the human oocyte and is essential for human fertilisation.</title>
        <authorList>
            <person name="Jean C."/>
            <person name="Haghighirad F."/>
            <person name="Zhu Y."/>
            <person name="Chalbi M."/>
            <person name="Ziyyat A."/>
            <person name="Rubinstein E."/>
            <person name="Gourier C."/>
            <person name="Yip P."/>
            <person name="Wolf J.P."/>
            <person name="Lee J.E."/>
            <person name="Boucheix C."/>
            <person name="Barraud-Lange V."/>
        </authorList>
    </citation>
    <scope>FUNCTION</scope>
    <scope>SUBCELLULAR LOCATION</scope>
    <scope>TISSUE SPECIFICITY</scope>
    <scope>INTERACTION WITH IZUMO1</scope>
</reference>
<reference key="4">
    <citation type="journal article" date="2022" name="Sci. Adv.">
        <title>MAIA, Fc receptor-like 3, supersedes JUNO as IZUMO1 receptor during human fertilization.</title>
        <authorList>
            <person name="Vondrakova J."/>
            <person name="Frolikova M."/>
            <person name="Ded L."/>
            <person name="Cerny J."/>
            <person name="Postlerova P."/>
            <person name="Palenikova V."/>
            <person name="Simonik O."/>
            <person name="Nahacka Z."/>
            <person name="Basus K."/>
            <person name="Valaskova E."/>
            <person name="Machan R."/>
            <person name="Pacey A."/>
            <person name="Holubcova Z."/>
            <person name="Koubek P."/>
            <person name="Ezrova Z."/>
            <person name="Park S."/>
            <person name="Liu R."/>
            <person name="Partha R."/>
            <person name="Clark N."/>
            <person name="Neuzil J."/>
            <person name="Ikawa M."/>
            <person name="Erickson K."/>
            <person name="Lam K.S."/>
            <person name="Moore H."/>
            <person name="Komrskova K."/>
        </authorList>
    </citation>
    <scope>INTERACTION WITH FCRL3/MAIA</scope>
    <scope>SUBCELLULAR LOCATION</scope>
    <scope>TISSUE SPECIFICITY</scope>
</reference>
<reference key="5">
    <citation type="journal article" date="2016" name="Nature">
        <title>Molecular architecture of the human sperm IZUMO1 and egg JUNO fertilization complex.</title>
        <authorList>
            <person name="Aydin H."/>
            <person name="Sultana A."/>
            <person name="Li S."/>
            <person name="Thavalingam A."/>
            <person name="Lee J.E."/>
        </authorList>
    </citation>
    <scope>X-RAY CRYSTALLOGRAPHY (2.40 ANGSTROMS) OF 20-228 IN COMPLEX WITH IZUMO1</scope>
    <scope>INTERACTION WITH IZUMO1</scope>
    <scope>DISULFIDE BONDS</scope>
    <scope>MUTAGENESIS OF GLU-45; TRP-62; LEU-81 AND LYS-163</scope>
</reference>
<reference key="6">
    <citation type="journal article" date="2016" name="Nature">
        <title>Structure of IZUMO1-JUNO reveals sperm-oocyte recognition during mammalian fertilization.</title>
        <authorList>
            <person name="Ohto U."/>
            <person name="Ishida H."/>
            <person name="Krayukhina E."/>
            <person name="Uchiyama S."/>
            <person name="Inoue N."/>
            <person name="Shimizu T."/>
        </authorList>
    </citation>
    <scope>X-RAY CRYSTALLOGRAPHY (2.00 ANGSTROMS) OF 20-228 IN COMPLEX WITH IZUMO1</scope>
    <scope>INTERACTION WITH IZUMO1</scope>
    <scope>SUBUNIT</scope>
    <scope>DISULFIDE BONDS</scope>
    <scope>MUTAGENESIS OF TRP-62 AND LEU-81</scope>
</reference>
<keyword id="KW-0002">3D-structure</keyword>
<keyword id="KW-0025">Alternative splicing</keyword>
<keyword id="KW-1003">Cell membrane</keyword>
<keyword id="KW-0966">Cell projection</keyword>
<keyword id="KW-1015">Disulfide bond</keyword>
<keyword id="KW-0278">Fertilization</keyword>
<keyword id="KW-0325">Glycoprotein</keyword>
<keyword id="KW-0336">GPI-anchor</keyword>
<keyword id="KW-0449">Lipoprotein</keyword>
<keyword id="KW-0472">Membrane</keyword>
<keyword id="KW-1267">Proteomics identification</keyword>
<keyword id="KW-0675">Receptor</keyword>
<keyword id="KW-1185">Reference proteome</keyword>
<keyword id="KW-0732">Signal</keyword>
<comment type="function">
    <text evidence="2 7">Receptor for IZUMO1 present at the cell surface of oocytes (oolemma), which is essential for species-specific gamete recognition and fertilization. The IZUMO1:IZUMO1R/JUNO interaction is a necessary adhesion event between sperm and egg that is required for fertilization but is not sufficient for cell fusion (PubMed:30517645). The ligand-receptor interaction probably does not act as a membrane 'fusogen'. Does not bind folate.</text>
</comment>
<comment type="subunit">
    <text evidence="1 4 5 6 7 8">Monomer (PubMed:27309808). Interacts with IZUMO1; the interaction is direct. IZUMO1 and IZUMO1R/JUNO form a complex with 1:1 stoichiometry (PubMed:24739963, PubMed:27309808, PubMed:27309818, PubMed:30517645). Interacts with FCRL3/MAIA; FCRL3/MAIA replaces IZUMO1R/JUNO as IZUMO1 receptor after sperm-egg adhesion, thereby permitting species-specific gamete fusion (PubMed:36070373). Interacts with WDR54 (By similarity).</text>
</comment>
<comment type="interaction">
    <interactant intactId="EBI-16208304">
        <id>A6ND01-1</id>
    </interactant>
    <interactant intactId="EBI-16208297">
        <id>Q8IYV9-1</id>
        <label>IZUMO1</label>
    </interactant>
    <organismsDiffer>false</organismsDiffer>
    <experiments>13</experiments>
</comment>
<comment type="subcellular location">
    <subcellularLocation>
        <location evidence="7">Cell membrane</location>
        <topology evidence="2">Lipid-anchor</topology>
        <topology evidence="2">GPI-anchor</topology>
    </subcellularLocation>
    <subcellularLocation>
        <location evidence="8">Cell projection</location>
        <location evidence="8">Microvillus membrane</location>
        <topology evidence="2">Lipid-anchor</topology>
        <topology evidence="2">GPI-anchor</topology>
    </subcellularLocation>
    <text evidence="2">GPI-anchored at the oolemma microvilli.</text>
</comment>
<comment type="alternative products">
    <event type="alternative splicing"/>
    <isoform>
        <id>A6ND01-1</id>
        <name>1</name>
        <sequence type="displayed"/>
    </isoform>
    <isoform>
        <id>A6ND01-2</id>
        <name>2</name>
        <sequence type="described" ref="VSP_040470"/>
    </isoform>
</comment>
<comment type="tissue specificity">
    <text evidence="7 8">Expressed in unfertilized oocytes (at protein level).</text>
</comment>
<comment type="PTM">
    <text evidence="2">The protein is rapidly cleaved following fertilization, being only weakly detectable in zona-intact fertilized eggs at telophase II and undetectable at the pronuclear stage. Sheding is probably required to block to polyspermy and ensuring egg fusion with a single sperm.</text>
</comment>
<comment type="miscellaneous">
    <molecule>Isoform 2</molecule>
    <text evidence="10">Gene prediction based on similarity to orthologs.</text>
</comment>
<comment type="similarity">
    <text evidence="10">Belongs to the folate receptor family.</text>
</comment>
<sequence length="250" mass="28672">MACWWPLLLELWTVMPTWAGDELLNICMNAKHHKRVPSPEDKLYEECIPWKDNACCTLTTSWEAHLDVSPLYNFSLFHCGLLMPGCRKHFIQAICFYECSPNLGPWIQPVGSLGWEVAPSGQGERVVNVPLCQEDCEEWWEDCRMSYTCKSNWRGGWDWSQGKNRCPKGAQCLPFSHYFPTPADLCEKTWSNSFKASPERRNSGRCLQKWFEPAQGNPNVAVARLFASSAPSWELSYTIMVCSLFLPFLS</sequence>
<gene>
    <name evidence="11" type="primary">IZUMO1R</name>
    <name type="synonym">FOLR4</name>
    <name evidence="9" type="synonym">JUNO</name>
</gene>
<protein>
    <recommendedName>
        <fullName evidence="10">Sperm-egg fusion protein Juno</fullName>
    </recommendedName>
    <alternativeName>
        <fullName>Folate receptor 4</fullName>
    </alternativeName>
    <alternativeName>
        <fullName evidence="2">Folate receptor delta</fullName>
        <shortName evidence="2">FR-delta</shortName>
    </alternativeName>
    <alternativeName>
        <fullName evidence="9">IZUMO1 receptor protein JUNO</fullName>
    </alternativeName>
</protein>
<name>JUNO_HUMAN</name>
<dbReference type="EMBL" id="AP002784">
    <property type="status" value="NOT_ANNOTATED_CDS"/>
    <property type="molecule type" value="Genomic_DNA"/>
</dbReference>
<dbReference type="CCDS" id="CCDS81615.1">
    <molecule id="A6ND01-1"/>
</dbReference>
<dbReference type="RefSeq" id="NP_001186135.1">
    <molecule id="A6ND01-1"/>
    <property type="nucleotide sequence ID" value="NM_001199206.4"/>
</dbReference>
<dbReference type="RefSeq" id="NP_001380539.1">
    <molecule id="A6ND01-1"/>
    <property type="nucleotide sequence ID" value="NM_001393610.1"/>
</dbReference>
<dbReference type="PDB" id="5F4E">
    <property type="method" value="X-ray"/>
    <property type="resolution" value="2.40 A"/>
    <property type="chains" value="B=20-228"/>
</dbReference>
<dbReference type="PDB" id="5F4Q">
    <property type="method" value="X-ray"/>
    <property type="resolution" value="1.80 A"/>
    <property type="chains" value="A/B/C/D=20-228"/>
</dbReference>
<dbReference type="PDB" id="5JKA">
    <property type="method" value="X-ray"/>
    <property type="resolution" value="2.00 A"/>
    <property type="chains" value="A/B=20-228"/>
</dbReference>
<dbReference type="PDB" id="5JKB">
    <property type="method" value="X-ray"/>
    <property type="resolution" value="3.23 A"/>
    <property type="chains" value="A/B/C/D=20-228"/>
</dbReference>
<dbReference type="PDB" id="5JKC">
    <property type="method" value="X-ray"/>
    <property type="resolution" value="2.90 A"/>
    <property type="chains" value="B=20-228"/>
</dbReference>
<dbReference type="PDB" id="5JKD">
    <property type="method" value="X-ray"/>
    <property type="resolution" value="2.90 A"/>
    <property type="chains" value="B=20-228"/>
</dbReference>
<dbReference type="PDB" id="5JKE">
    <property type="method" value="X-ray"/>
    <property type="resolution" value="2.86 A"/>
    <property type="chains" value="B/D=20-228"/>
</dbReference>
<dbReference type="PDBsum" id="5F4E"/>
<dbReference type="PDBsum" id="5F4Q"/>
<dbReference type="PDBsum" id="5JKA"/>
<dbReference type="PDBsum" id="5JKB"/>
<dbReference type="PDBsum" id="5JKC"/>
<dbReference type="PDBsum" id="5JKD"/>
<dbReference type="PDBsum" id="5JKE"/>
<dbReference type="SMR" id="A6ND01"/>
<dbReference type="CORUM" id="A6ND01"/>
<dbReference type="DIP" id="DIP-62034N"/>
<dbReference type="FunCoup" id="A6ND01">
    <property type="interactions" value="3"/>
</dbReference>
<dbReference type="IntAct" id="A6ND01">
    <property type="interactions" value="1"/>
</dbReference>
<dbReference type="STRING" id="9606.ENSP00000332963"/>
<dbReference type="TCDB" id="9.B.92.1.2">
    <property type="family name" value="the folate receptor (fr) family"/>
</dbReference>
<dbReference type="GlyCosmos" id="A6ND01">
    <property type="glycosylation" value="1 site, No reported glycans"/>
</dbReference>
<dbReference type="GlyGen" id="A6ND01">
    <property type="glycosylation" value="2 sites"/>
</dbReference>
<dbReference type="BioMuta" id="IZUMO1R"/>
<dbReference type="MassIVE" id="A6ND01"/>
<dbReference type="PaxDb" id="9606-ENSP00000332963"/>
<dbReference type="PeptideAtlas" id="A6ND01"/>
<dbReference type="Antibodypedia" id="45349">
    <property type="antibodies" value="278 antibodies from 18 providers"/>
</dbReference>
<dbReference type="DNASU" id="390243"/>
<dbReference type="Ensembl" id="ENST00000328458.6">
    <molecule id="A6ND01-1"/>
    <property type="protein sequence ID" value="ENSP00000332963.5"/>
    <property type="gene ID" value="ENSG00000183560.10"/>
</dbReference>
<dbReference type="Ensembl" id="ENST00000440961.6">
    <molecule id="A6ND01-2"/>
    <property type="protein sequence ID" value="ENSP00000416935.2"/>
    <property type="gene ID" value="ENSG00000183560.10"/>
</dbReference>
<dbReference type="Ensembl" id="ENST00000687084.1">
    <molecule id="A6ND01-1"/>
    <property type="protein sequence ID" value="ENSP00000510041.1"/>
    <property type="gene ID" value="ENSG00000183560.10"/>
</dbReference>
<dbReference type="GeneID" id="390243"/>
<dbReference type="KEGG" id="hsa:390243"/>
<dbReference type="MANE-Select" id="ENST00000687084.1">
    <property type="protein sequence ID" value="ENSP00000510041.1"/>
    <property type="RefSeq nucleotide sequence ID" value="NM_001199206.4"/>
    <property type="RefSeq protein sequence ID" value="NP_001186135.1"/>
</dbReference>
<dbReference type="UCSC" id="uc058gou.1">
    <molecule id="A6ND01-1"/>
    <property type="organism name" value="human"/>
</dbReference>
<dbReference type="AGR" id="HGNC:32565"/>
<dbReference type="CTD" id="390243"/>
<dbReference type="DisGeNET" id="390243"/>
<dbReference type="GeneCards" id="IZUMO1R"/>
<dbReference type="HGNC" id="HGNC:32565">
    <property type="gene designation" value="IZUMO1R"/>
</dbReference>
<dbReference type="HPA" id="ENSG00000183560">
    <property type="expression patterns" value="Not detected"/>
</dbReference>
<dbReference type="MIM" id="615737">
    <property type="type" value="gene"/>
</dbReference>
<dbReference type="neXtProt" id="NX_A6ND01"/>
<dbReference type="OpenTargets" id="ENSG00000183560"/>
<dbReference type="VEuPathDB" id="HostDB:ENSG00000183560"/>
<dbReference type="eggNOG" id="ENOG502RYYP">
    <property type="taxonomic scope" value="Eukaryota"/>
</dbReference>
<dbReference type="GeneTree" id="ENSGT00950000183144"/>
<dbReference type="InParanoid" id="A6ND01"/>
<dbReference type="OMA" id="NAPLCQE"/>
<dbReference type="OrthoDB" id="567542at2759"/>
<dbReference type="PAN-GO" id="A6ND01">
    <property type="GO annotations" value="5 GO annotations based on evolutionary models"/>
</dbReference>
<dbReference type="PhylomeDB" id="A6ND01"/>
<dbReference type="TreeFam" id="TF328532"/>
<dbReference type="PathwayCommons" id="A6ND01"/>
<dbReference type="Reactome" id="R-HSA-163125">
    <property type="pathway name" value="Post-translational modification: synthesis of GPI-anchored proteins"/>
</dbReference>
<dbReference type="SignaLink" id="A6ND01"/>
<dbReference type="BioGRID-ORCS" id="390243">
    <property type="hits" value="2 hits in 300 CRISPR screens"/>
</dbReference>
<dbReference type="GenomeRNAi" id="390243"/>
<dbReference type="Pharos" id="A6ND01">
    <property type="development level" value="Tbio"/>
</dbReference>
<dbReference type="PRO" id="PR:A6ND01"/>
<dbReference type="Proteomes" id="UP000005640">
    <property type="component" value="Chromosome 11"/>
</dbReference>
<dbReference type="RNAct" id="A6ND01">
    <property type="molecule type" value="protein"/>
</dbReference>
<dbReference type="Bgee" id="ENSG00000183560">
    <property type="expression patterns" value="Expressed in lymph node and 39 other cell types or tissues"/>
</dbReference>
<dbReference type="GO" id="GO:0009897">
    <property type="term" value="C:external side of plasma membrane"/>
    <property type="evidence" value="ECO:0000318"/>
    <property type="project" value="GO_Central"/>
</dbReference>
<dbReference type="GO" id="GO:0005576">
    <property type="term" value="C:extracellular region"/>
    <property type="evidence" value="ECO:0000304"/>
    <property type="project" value="Reactome"/>
</dbReference>
<dbReference type="GO" id="GO:0031528">
    <property type="term" value="C:microvillus membrane"/>
    <property type="evidence" value="ECO:0007669"/>
    <property type="project" value="UniProtKB-SubCell"/>
</dbReference>
<dbReference type="GO" id="GO:0005886">
    <property type="term" value="C:plasma membrane"/>
    <property type="evidence" value="ECO:0000314"/>
    <property type="project" value="UniProtKB"/>
</dbReference>
<dbReference type="GO" id="GO:0038023">
    <property type="term" value="F:signaling receptor activity"/>
    <property type="evidence" value="ECO:0000353"/>
    <property type="project" value="UniProtKB"/>
</dbReference>
<dbReference type="GO" id="GO:0005102">
    <property type="term" value="F:signaling receptor binding"/>
    <property type="evidence" value="ECO:0007669"/>
    <property type="project" value="Ensembl"/>
</dbReference>
<dbReference type="GO" id="GO:0007155">
    <property type="term" value="P:cell adhesion"/>
    <property type="evidence" value="ECO:0000250"/>
    <property type="project" value="UniProtKB"/>
</dbReference>
<dbReference type="GO" id="GO:0007342">
    <property type="term" value="P:fusion of sperm to egg plasma membrane involved in single fertilization"/>
    <property type="evidence" value="ECO:0000314"/>
    <property type="project" value="UniProtKB"/>
</dbReference>
<dbReference type="GO" id="GO:0007338">
    <property type="term" value="P:single fertilization"/>
    <property type="evidence" value="ECO:0000314"/>
    <property type="project" value="UniProtKB"/>
</dbReference>
<dbReference type="GO" id="GO:0035036">
    <property type="term" value="P:sperm-egg recognition"/>
    <property type="evidence" value="ECO:0000250"/>
    <property type="project" value="UniProtKB"/>
</dbReference>
<dbReference type="InterPro" id="IPR004269">
    <property type="entry name" value="Folate_rcpt"/>
</dbReference>
<dbReference type="InterPro" id="IPR018143">
    <property type="entry name" value="Folate_rcpt-like"/>
</dbReference>
<dbReference type="PANTHER" id="PTHR10517">
    <property type="entry name" value="FOLATE RECEPTOR"/>
    <property type="match status" value="1"/>
</dbReference>
<dbReference type="PANTHER" id="PTHR10517:SF10">
    <property type="entry name" value="SPERM-EGG FUSION PROTEIN JUNO"/>
    <property type="match status" value="1"/>
</dbReference>
<dbReference type="Pfam" id="PF03024">
    <property type="entry name" value="Folate_rec"/>
    <property type="match status" value="1"/>
</dbReference>
<evidence type="ECO:0000250" key="1">
    <source>
        <dbReference type="UniProtKB" id="F1M928"/>
    </source>
</evidence>
<evidence type="ECO:0000250" key="2">
    <source>
        <dbReference type="UniProtKB" id="Q9EQF4"/>
    </source>
</evidence>
<evidence type="ECO:0000255" key="3"/>
<evidence type="ECO:0000269" key="4">
    <source>
    </source>
</evidence>
<evidence type="ECO:0000269" key="5">
    <source>
    </source>
</evidence>
<evidence type="ECO:0000269" key="6">
    <source>
    </source>
</evidence>
<evidence type="ECO:0000269" key="7">
    <source>
    </source>
</evidence>
<evidence type="ECO:0000269" key="8">
    <source>
    </source>
</evidence>
<evidence type="ECO:0000303" key="9">
    <source>
    </source>
</evidence>
<evidence type="ECO:0000305" key="10"/>
<evidence type="ECO:0000312" key="11">
    <source>
        <dbReference type="HGNC" id="HGNC:32565"/>
    </source>
</evidence>
<evidence type="ECO:0007744" key="12">
    <source>
        <dbReference type="PDB" id="5F4E"/>
    </source>
</evidence>
<evidence type="ECO:0007744" key="13">
    <source>
        <dbReference type="PDB" id="5F4Q"/>
    </source>
</evidence>
<evidence type="ECO:0007744" key="14">
    <source>
        <dbReference type="PDB" id="5JKA"/>
    </source>
</evidence>
<evidence type="ECO:0007744" key="15">
    <source>
        <dbReference type="PDB" id="5JKB"/>
    </source>
</evidence>
<evidence type="ECO:0007744" key="16">
    <source>
        <dbReference type="PDB" id="5JKC"/>
    </source>
</evidence>
<evidence type="ECO:0007744" key="17">
    <source>
        <dbReference type="PDB" id="5JKD"/>
    </source>
</evidence>
<evidence type="ECO:0007744" key="18">
    <source>
        <dbReference type="PDB" id="5JKE"/>
    </source>
</evidence>
<evidence type="ECO:0007829" key="19">
    <source>
        <dbReference type="PDB" id="5F4E"/>
    </source>
</evidence>
<evidence type="ECO:0007829" key="20">
    <source>
        <dbReference type="PDB" id="5F4Q"/>
    </source>
</evidence>
<evidence type="ECO:0007829" key="21">
    <source>
        <dbReference type="PDB" id="5JKA"/>
    </source>
</evidence>
<evidence type="ECO:0007829" key="22">
    <source>
        <dbReference type="PDB" id="5JKC"/>
    </source>
</evidence>